<name>YBGC_HELPY</name>
<organism>
    <name type="scientific">Helicobacter pylori (strain ATCC 700392 / 26695)</name>
    <name type="common">Campylobacter pylori</name>
    <dbReference type="NCBI Taxonomy" id="85962"/>
    <lineage>
        <taxon>Bacteria</taxon>
        <taxon>Pseudomonadati</taxon>
        <taxon>Campylobacterota</taxon>
        <taxon>Epsilonproteobacteria</taxon>
        <taxon>Campylobacterales</taxon>
        <taxon>Helicobacteraceae</taxon>
        <taxon>Helicobacter</taxon>
    </lineage>
</organism>
<sequence>MRCRVYYEDTDSEGVVYHANYLKYCERARSEFFFKQNVLPENEEGVFVIRSIKADFFTPASLGQVLEIRTQIKELRKVFVVLFQEIYCIQNASLEPMKPFKVFASEIKFGFVNRSTYSPIAIPKLFKELLNAI</sequence>
<accession>P94842</accession>
<accession>O25238</accession>
<gene>
    <name type="primary">ybgC</name>
    <name type="ordered locus">HP_0496</name>
</gene>
<keyword id="KW-0002">3D-structure</keyword>
<keyword id="KW-0378">Hydrolase</keyword>
<keyword id="KW-0443">Lipid metabolism</keyword>
<keyword id="KW-1185">Reference proteome</keyword>
<proteinExistence type="evidence at protein level"/>
<reference key="1">
    <citation type="submission" date="1996-10" db="EMBL/GenBank/DDBJ databases">
        <title>Sequence of the dihydrodipicolinate reductase gene (dapB) from Helicobacter pylori and complementation in Escherichia coli.</title>
        <authorList>
            <person name="Clairoux N."/>
            <person name="Boissinot M."/>
        </authorList>
    </citation>
    <scope>NUCLEOTIDE SEQUENCE [GENOMIC DNA]</scope>
    <source>
        <strain>DSM 4867 / CCUG 17874 / NCTC 11638</strain>
    </source>
</reference>
<reference key="2">
    <citation type="journal article" date="1997" name="Nature">
        <title>The complete genome sequence of the gastric pathogen Helicobacter pylori.</title>
        <authorList>
            <person name="Tomb J.-F."/>
            <person name="White O."/>
            <person name="Kerlavage A.R."/>
            <person name="Clayton R.A."/>
            <person name="Sutton G.G."/>
            <person name="Fleischmann R.D."/>
            <person name="Ketchum K.A."/>
            <person name="Klenk H.-P."/>
            <person name="Gill S.R."/>
            <person name="Dougherty B.A."/>
            <person name="Nelson K.E."/>
            <person name="Quackenbush J."/>
            <person name="Zhou L."/>
            <person name="Kirkness E.F."/>
            <person name="Peterson S.N."/>
            <person name="Loftus B.J."/>
            <person name="Richardson D.L."/>
            <person name="Dodson R.J."/>
            <person name="Khalak H.G."/>
            <person name="Glodek A."/>
            <person name="McKenney K."/>
            <person name="FitzGerald L.M."/>
            <person name="Lee N."/>
            <person name="Adams M.D."/>
            <person name="Hickey E.K."/>
            <person name="Berg D.E."/>
            <person name="Gocayne J.D."/>
            <person name="Utterback T.R."/>
            <person name="Peterson J.D."/>
            <person name="Kelley J.M."/>
            <person name="Cotton M.D."/>
            <person name="Weidman J.F."/>
            <person name="Fujii C."/>
            <person name="Bowman C."/>
            <person name="Watthey L."/>
            <person name="Wallin E."/>
            <person name="Hayes W.S."/>
            <person name="Borodovsky M."/>
            <person name="Karp P.D."/>
            <person name="Smith H.O."/>
            <person name="Fraser C.M."/>
            <person name="Venter J.C."/>
        </authorList>
    </citation>
    <scope>NUCLEOTIDE SEQUENCE [LARGE SCALE GENOMIC DNA]</scope>
    <source>
        <strain>ATCC 700392 / 26695</strain>
    </source>
</reference>
<reference key="3">
    <citation type="journal article" date="2004" name="Mol. Cell. Proteomics">
        <title>Biochemical characterization of protein complexes from the Helicobacter pylori protein interaction map: strategies for complex formation and evidence for novel interactions within type IV secretion systems.</title>
        <authorList>
            <person name="Terradot L."/>
            <person name="Durnell N."/>
            <person name="Li M."/>
            <person name="Li M."/>
            <person name="Ory J."/>
            <person name="Labigne A."/>
            <person name="Legrain P."/>
            <person name="Colland F."/>
            <person name="Waksman G."/>
        </authorList>
    </citation>
    <scope>INTERACTION WITH CAGA</scope>
</reference>
<reference key="4">
    <citation type="journal article" date="2008" name="Proteins">
        <title>Structural and enzymatic characterization of HP0496, a YbgC thioesterase from Helicobacter pylori.</title>
        <authorList>
            <person name="Angelini A."/>
            <person name="Cendron L."/>
            <person name="Goncalves S."/>
            <person name="Zanotti G."/>
            <person name="Terradot L."/>
        </authorList>
    </citation>
    <scope>X-RAY CRYSTALLOGRAPHY (1.70 ANGSTROMS)</scope>
    <scope>FUNCTION</scope>
    <scope>SUBUNIT</scope>
</reference>
<protein>
    <recommendedName>
        <fullName>Acyl-CoA thioesterase YbgC</fullName>
        <ecNumber>3.1.2.-</ecNumber>
    </recommendedName>
</protein>
<dbReference type="EC" id="3.1.2.-"/>
<dbReference type="EMBL" id="U75328">
    <property type="protein sequence ID" value="AAB39716.1"/>
    <property type="molecule type" value="Genomic_DNA"/>
</dbReference>
<dbReference type="EMBL" id="AE000511">
    <property type="protein sequence ID" value="AAD07561.1"/>
    <property type="molecule type" value="Genomic_DNA"/>
</dbReference>
<dbReference type="PIR" id="H64581">
    <property type="entry name" value="H64581"/>
</dbReference>
<dbReference type="RefSeq" id="NP_207293.1">
    <property type="nucleotide sequence ID" value="NC_000915.1"/>
</dbReference>
<dbReference type="RefSeq" id="WP_001203797.1">
    <property type="nucleotide sequence ID" value="NC_018939.1"/>
</dbReference>
<dbReference type="PDB" id="2PZH">
    <property type="method" value="X-ray"/>
    <property type="resolution" value="1.70 A"/>
    <property type="chains" value="A/B/C/D=1-133"/>
</dbReference>
<dbReference type="PDBsum" id="2PZH"/>
<dbReference type="SMR" id="P94842"/>
<dbReference type="DIP" id="DIP-3437N"/>
<dbReference type="FunCoup" id="P94842">
    <property type="interactions" value="136"/>
</dbReference>
<dbReference type="IntAct" id="P94842">
    <property type="interactions" value="1"/>
</dbReference>
<dbReference type="MINT" id="P94842"/>
<dbReference type="STRING" id="85962.HP_0496"/>
<dbReference type="PaxDb" id="85962-C694_02550"/>
<dbReference type="EnsemblBacteria" id="AAD07561">
    <property type="protein sequence ID" value="AAD07561"/>
    <property type="gene ID" value="HP_0496"/>
</dbReference>
<dbReference type="KEGG" id="heo:C694_02550"/>
<dbReference type="KEGG" id="hpy:HP_0496"/>
<dbReference type="PATRIC" id="fig|85962.47.peg.534"/>
<dbReference type="eggNOG" id="COG0824">
    <property type="taxonomic scope" value="Bacteria"/>
</dbReference>
<dbReference type="InParanoid" id="P94842"/>
<dbReference type="OrthoDB" id="9808429at2"/>
<dbReference type="PhylomeDB" id="P94842"/>
<dbReference type="EvolutionaryTrace" id="P94842"/>
<dbReference type="Proteomes" id="UP000000429">
    <property type="component" value="Chromosome"/>
</dbReference>
<dbReference type="GO" id="GO:0047617">
    <property type="term" value="F:fatty acyl-CoA hydrolase activity"/>
    <property type="evidence" value="ECO:0000318"/>
    <property type="project" value="GO_Central"/>
</dbReference>
<dbReference type="GO" id="GO:0006629">
    <property type="term" value="P:lipid metabolic process"/>
    <property type="evidence" value="ECO:0007669"/>
    <property type="project" value="UniProtKB-KW"/>
</dbReference>
<dbReference type="CDD" id="cd00586">
    <property type="entry name" value="4HBT"/>
    <property type="match status" value="1"/>
</dbReference>
<dbReference type="Gene3D" id="3.10.129.10">
    <property type="entry name" value="Hotdog Thioesterase"/>
    <property type="match status" value="1"/>
</dbReference>
<dbReference type="InterPro" id="IPR050563">
    <property type="entry name" value="4-hydroxybenzoyl-CoA_TE"/>
</dbReference>
<dbReference type="InterPro" id="IPR008272">
    <property type="entry name" value="HB-CoA_thioesterase_AS"/>
</dbReference>
<dbReference type="InterPro" id="IPR029069">
    <property type="entry name" value="HotDog_dom_sf"/>
</dbReference>
<dbReference type="InterPro" id="IPR006683">
    <property type="entry name" value="Thioestr_dom"/>
</dbReference>
<dbReference type="InterPro" id="IPR006684">
    <property type="entry name" value="YbgC/YbaW"/>
</dbReference>
<dbReference type="NCBIfam" id="TIGR00051">
    <property type="entry name" value="YbgC/FadM family acyl-CoA thioesterase"/>
    <property type="match status" value="1"/>
</dbReference>
<dbReference type="PANTHER" id="PTHR31793">
    <property type="entry name" value="4-HYDROXYBENZOYL-COA THIOESTERASE FAMILY MEMBER"/>
    <property type="match status" value="1"/>
</dbReference>
<dbReference type="PANTHER" id="PTHR31793:SF37">
    <property type="entry name" value="ACYL-COA THIOESTER HYDROLASE YBGC"/>
    <property type="match status" value="1"/>
</dbReference>
<dbReference type="Pfam" id="PF03061">
    <property type="entry name" value="4HBT"/>
    <property type="match status" value="1"/>
</dbReference>
<dbReference type="PIRSF" id="PIRSF003230">
    <property type="entry name" value="YbgC"/>
    <property type="match status" value="1"/>
</dbReference>
<dbReference type="SUPFAM" id="SSF54637">
    <property type="entry name" value="Thioesterase/thiol ester dehydrase-isomerase"/>
    <property type="match status" value="1"/>
</dbReference>
<dbReference type="PROSITE" id="PS01328">
    <property type="entry name" value="4HBCOA_THIOESTERASE"/>
    <property type="match status" value="1"/>
</dbReference>
<evidence type="ECO:0000255" key="1">
    <source>
        <dbReference type="PROSITE-ProRule" id="PRU10041"/>
    </source>
</evidence>
<evidence type="ECO:0000269" key="2">
    <source>
    </source>
</evidence>
<evidence type="ECO:0000305" key="3"/>
<evidence type="ECO:0007829" key="4">
    <source>
        <dbReference type="PDB" id="2PZH"/>
    </source>
</evidence>
<comment type="function">
    <text evidence="2">Thioesterase that may be involved in phospholipid metabolism. Displays acyl-CoA thioesterase activity with lauroyl-CoA (C12:0), myristoyl-CoA (C14:0), palmitoyl-CoA (C16:0), stearoyl-CoA (C18:0) and benzoyl-CoA, catalyzing the hydrolysis of the thioester bond. Has low activity with butyryl-CoA and octanoyl-CoA.</text>
</comment>
<comment type="biophysicochemical properties">
    <kinetics>
        <KM>200 uM for benzoyl-CoA</KM>
        <KM>210 uM for stearoyl-CoA</KM>
        <KM>570 uM for palmitoyl-CoA</KM>
        <KM>240 uM for myristoyl-CoA</KM>
        <KM>160 uM for lauroyl-CoA</KM>
        <KM>40 uM for octanoyl-CoA</KM>
        <KM>27 uM for butyryl-CoA</KM>
        <text>kcat is 0.028 sec(-1) with benzoyl-CoA, 0.034 sec(-1) with stearoyl-CoA, 0.045 sec(-1) with palmitoyl-CoA, 0.024 sec(-1) with myristoyl-CoA, 0.015 sec(-1) with lauroyl-CoA and 0.0013 sec(-1) with octanoyl-CoA.</text>
    </kinetics>
</comment>
<comment type="subunit">
    <text evidence="2">Homotetramer. May interact with CagA.</text>
</comment>
<comment type="interaction">
    <interactant intactId="EBI-528090">
        <id>P94842</id>
    </interactant>
    <interactant intactId="EBI-528104">
        <id>P55980</id>
        <label>cagA</label>
    </interactant>
    <organismsDiffer>false</organismsDiffer>
    <experiments>2</experiments>
</comment>
<comment type="similarity">
    <text evidence="3">Belongs to the 4-hydroxybenzoyl-CoA thioesterase family.</text>
</comment>
<feature type="chain" id="PRO_0000087767" description="Acyl-CoA thioesterase YbgC">
    <location>
        <begin position="1"/>
        <end position="133"/>
    </location>
</feature>
<feature type="active site" evidence="1">
    <location>
        <position position="11"/>
    </location>
</feature>
<feature type="sequence conflict" description="In Ref. 1; AAB39716." evidence="3" ref="1">
    <original>I</original>
    <variation>V</variation>
    <location>
        <position position="133"/>
    </location>
</feature>
<feature type="strand" evidence="4">
    <location>
        <begin position="1"/>
        <end position="4"/>
    </location>
</feature>
<feature type="helix" evidence="4">
    <location>
        <begin position="7"/>
        <end position="9"/>
    </location>
</feature>
<feature type="strand" evidence="4">
    <location>
        <begin position="14"/>
        <end position="16"/>
    </location>
</feature>
<feature type="helix" evidence="4">
    <location>
        <begin position="20"/>
        <end position="34"/>
    </location>
</feature>
<feature type="turn" evidence="4">
    <location>
        <begin position="35"/>
        <end position="37"/>
    </location>
</feature>
<feature type="strand" evidence="4">
    <location>
        <begin position="40"/>
        <end position="42"/>
    </location>
</feature>
<feature type="strand" evidence="4">
    <location>
        <begin position="45"/>
        <end position="56"/>
    </location>
</feature>
<feature type="strand" evidence="4">
    <location>
        <begin position="65"/>
        <end position="75"/>
    </location>
</feature>
<feature type="strand" evidence="4">
    <location>
        <begin position="77"/>
        <end position="90"/>
    </location>
</feature>
<feature type="strand" evidence="4">
    <location>
        <begin position="100"/>
        <end position="112"/>
    </location>
</feature>
<feature type="turn" evidence="4">
    <location>
        <begin position="114"/>
        <end position="116"/>
    </location>
</feature>
<feature type="helix" evidence="4">
    <location>
        <begin position="124"/>
        <end position="131"/>
    </location>
</feature>